<sequence length="132" mass="14344">MPTINQLVRKERKKVTVKSKSPALKECPQRRGVCTRVYTTTPKKPNSALRKVAKVRLTSGFEVISYIGGEGHNLQEHSIVLVRGGRVKDLPGVKYHIVRGALDTAGVAKRTVARSKYGAKRPKAGAAAAAKK</sequence>
<feature type="chain" id="PRO_1000049777" description="Small ribosomal subunit protein uS12">
    <location>
        <begin position="1"/>
        <end position="132"/>
    </location>
</feature>
<feature type="modified residue" description="3-methylthioaspartic acid" evidence="1">
    <location>
        <position position="89"/>
    </location>
</feature>
<dbReference type="EMBL" id="CP000767">
    <property type="protein sequence ID" value="EAU01291.1"/>
    <property type="molecule type" value="Genomic_DNA"/>
</dbReference>
<dbReference type="RefSeq" id="WP_011992521.1">
    <property type="nucleotide sequence ID" value="NC_009715.2"/>
</dbReference>
<dbReference type="SMR" id="A7GZJ6"/>
<dbReference type="STRING" id="360105.CCV52592_0186"/>
<dbReference type="GeneID" id="61002647"/>
<dbReference type="KEGG" id="ccv:CCV52592_0186"/>
<dbReference type="HOGENOM" id="CLU_104295_1_2_7"/>
<dbReference type="OrthoDB" id="9802366at2"/>
<dbReference type="Proteomes" id="UP000006380">
    <property type="component" value="Chromosome"/>
</dbReference>
<dbReference type="GO" id="GO:0015935">
    <property type="term" value="C:small ribosomal subunit"/>
    <property type="evidence" value="ECO:0007669"/>
    <property type="project" value="InterPro"/>
</dbReference>
<dbReference type="GO" id="GO:0019843">
    <property type="term" value="F:rRNA binding"/>
    <property type="evidence" value="ECO:0007669"/>
    <property type="project" value="UniProtKB-UniRule"/>
</dbReference>
<dbReference type="GO" id="GO:0003735">
    <property type="term" value="F:structural constituent of ribosome"/>
    <property type="evidence" value="ECO:0007669"/>
    <property type="project" value="InterPro"/>
</dbReference>
<dbReference type="GO" id="GO:0000049">
    <property type="term" value="F:tRNA binding"/>
    <property type="evidence" value="ECO:0007669"/>
    <property type="project" value="UniProtKB-UniRule"/>
</dbReference>
<dbReference type="GO" id="GO:0006412">
    <property type="term" value="P:translation"/>
    <property type="evidence" value="ECO:0007669"/>
    <property type="project" value="UniProtKB-UniRule"/>
</dbReference>
<dbReference type="CDD" id="cd03368">
    <property type="entry name" value="Ribosomal_S12"/>
    <property type="match status" value="1"/>
</dbReference>
<dbReference type="FunFam" id="2.40.50.140:FF:000001">
    <property type="entry name" value="30S ribosomal protein S12"/>
    <property type="match status" value="1"/>
</dbReference>
<dbReference type="Gene3D" id="2.40.50.140">
    <property type="entry name" value="Nucleic acid-binding proteins"/>
    <property type="match status" value="1"/>
</dbReference>
<dbReference type="HAMAP" id="MF_00403_B">
    <property type="entry name" value="Ribosomal_uS12_B"/>
    <property type="match status" value="1"/>
</dbReference>
<dbReference type="InterPro" id="IPR012340">
    <property type="entry name" value="NA-bd_OB-fold"/>
</dbReference>
<dbReference type="InterPro" id="IPR006032">
    <property type="entry name" value="Ribosomal_uS12"/>
</dbReference>
<dbReference type="InterPro" id="IPR005679">
    <property type="entry name" value="Ribosomal_uS12_bac"/>
</dbReference>
<dbReference type="NCBIfam" id="TIGR00981">
    <property type="entry name" value="rpsL_bact"/>
    <property type="match status" value="1"/>
</dbReference>
<dbReference type="PANTHER" id="PTHR11652">
    <property type="entry name" value="30S RIBOSOMAL PROTEIN S12 FAMILY MEMBER"/>
    <property type="match status" value="1"/>
</dbReference>
<dbReference type="Pfam" id="PF00164">
    <property type="entry name" value="Ribosom_S12_S23"/>
    <property type="match status" value="1"/>
</dbReference>
<dbReference type="PIRSF" id="PIRSF002133">
    <property type="entry name" value="Ribosomal_S12/S23"/>
    <property type="match status" value="1"/>
</dbReference>
<dbReference type="PRINTS" id="PR01034">
    <property type="entry name" value="RIBOSOMALS12"/>
</dbReference>
<dbReference type="SUPFAM" id="SSF50249">
    <property type="entry name" value="Nucleic acid-binding proteins"/>
    <property type="match status" value="1"/>
</dbReference>
<dbReference type="PROSITE" id="PS00055">
    <property type="entry name" value="RIBOSOMAL_S12"/>
    <property type="match status" value="1"/>
</dbReference>
<keyword id="KW-0488">Methylation</keyword>
<keyword id="KW-1185">Reference proteome</keyword>
<keyword id="KW-0687">Ribonucleoprotein</keyword>
<keyword id="KW-0689">Ribosomal protein</keyword>
<keyword id="KW-0694">RNA-binding</keyword>
<keyword id="KW-0699">rRNA-binding</keyword>
<keyword id="KW-0820">tRNA-binding</keyword>
<comment type="function">
    <text evidence="2">With S4 and S5 plays an important role in translational accuracy.</text>
</comment>
<comment type="function">
    <text evidence="2">Interacts with and stabilizes bases of the 16S rRNA that are involved in tRNA selection in the A site and with the mRNA backbone. Located at the interface of the 30S and 50S subunits, it traverses the body of the 30S subunit contacting proteins on the other side and probably holding the rRNA structure together. The combined cluster of proteins S8, S12 and S17 appears to hold together the shoulder and platform of the 30S subunit.</text>
</comment>
<comment type="subunit">
    <text evidence="2">Part of the 30S ribosomal subunit. Contacts proteins S8 and S17. May interact with IF1 in the 30S initiation complex.</text>
</comment>
<comment type="similarity">
    <text evidence="2">Belongs to the universal ribosomal protein uS12 family.</text>
</comment>
<reference key="1">
    <citation type="submission" date="2007-07" db="EMBL/GenBank/DDBJ databases">
        <title>Genome sequence of Campylobacter curvus 525.92 isolated from human feces.</title>
        <authorList>
            <person name="Fouts D.E."/>
            <person name="Mongodin E.F."/>
            <person name="Puiu D."/>
            <person name="Sebastian Y."/>
            <person name="Miller W.G."/>
            <person name="Mandrell R.E."/>
            <person name="Lastovica A.J."/>
            <person name="Nelson K.E."/>
        </authorList>
    </citation>
    <scope>NUCLEOTIDE SEQUENCE [LARGE SCALE GENOMIC DNA]</scope>
    <source>
        <strain>525.92</strain>
    </source>
</reference>
<proteinExistence type="inferred from homology"/>
<organism>
    <name type="scientific">Campylobacter curvus (strain 525.92)</name>
    <dbReference type="NCBI Taxonomy" id="360105"/>
    <lineage>
        <taxon>Bacteria</taxon>
        <taxon>Pseudomonadati</taxon>
        <taxon>Campylobacterota</taxon>
        <taxon>Epsilonproteobacteria</taxon>
        <taxon>Campylobacterales</taxon>
        <taxon>Campylobacteraceae</taxon>
        <taxon>Campylobacter</taxon>
    </lineage>
</organism>
<name>RS12_CAMC5</name>
<evidence type="ECO:0000250" key="1"/>
<evidence type="ECO:0000255" key="2">
    <source>
        <dbReference type="HAMAP-Rule" id="MF_00403"/>
    </source>
</evidence>
<evidence type="ECO:0000305" key="3"/>
<gene>
    <name evidence="2" type="primary">rpsL</name>
    <name type="ordered locus">Ccur92_13340</name>
    <name type="ORF">CCV52592_0186</name>
</gene>
<accession>A7GZJ6</accession>
<protein>
    <recommendedName>
        <fullName evidence="2">Small ribosomal subunit protein uS12</fullName>
    </recommendedName>
    <alternativeName>
        <fullName evidence="3">30S ribosomal protein S12</fullName>
    </alternativeName>
</protein>